<feature type="initiator methionine" description="Removed" evidence="2">
    <location>
        <position position="1"/>
    </location>
</feature>
<feature type="chain" id="PRO_0000076916" description="Galectin-1">
    <location>
        <begin position="2"/>
        <end position="135"/>
    </location>
</feature>
<feature type="domain" description="Galectin" evidence="4">
    <location>
        <begin position="4"/>
        <end position="135"/>
    </location>
</feature>
<feature type="binding site" evidence="1">
    <location>
        <begin position="45"/>
        <end position="49"/>
    </location>
    <ligand>
        <name>a beta-D-galactoside</name>
        <dbReference type="ChEBI" id="CHEBI:28034"/>
    </ligand>
</feature>
<feature type="binding site" evidence="1">
    <location>
        <position position="53"/>
    </location>
    <ligand>
        <name>a beta-D-galactoside</name>
        <dbReference type="ChEBI" id="CHEBI:28034"/>
    </ligand>
</feature>
<feature type="binding site" evidence="1">
    <location>
        <position position="62"/>
    </location>
    <ligand>
        <name>a beta-D-galactoside</name>
        <dbReference type="ChEBI" id="CHEBI:28034"/>
    </ligand>
</feature>
<feature type="binding site" evidence="1">
    <location>
        <begin position="69"/>
        <end position="72"/>
    </location>
    <ligand>
        <name>a beta-D-galactoside</name>
        <dbReference type="ChEBI" id="CHEBI:28034"/>
    </ligand>
</feature>
<feature type="modified residue" description="N-acetylalanine" evidence="2">
    <location>
        <position position="2"/>
    </location>
</feature>
<feature type="modified residue" description="N6-acetyllysine" evidence="3">
    <location>
        <position position="13"/>
    </location>
</feature>
<feature type="modified residue" description="N6-acetyllysine" evidence="3">
    <location>
        <position position="19"/>
    </location>
</feature>
<feature type="modified residue" description="N6-acetyllysine" evidence="2">
    <location>
        <position position="29"/>
    </location>
</feature>
<feature type="modified residue" description="Phosphoserine" evidence="2">
    <location>
        <position position="30"/>
    </location>
</feature>
<feature type="modified residue" description="N6-acetyllysine; alternate" evidence="3">
    <location>
        <position position="108"/>
    </location>
</feature>
<feature type="modified residue" description="N6-succinyllysine; alternate" evidence="3">
    <location>
        <position position="108"/>
    </location>
</feature>
<feature type="modified residue" description="N6-acetyllysine" evidence="3">
    <location>
        <position position="128"/>
    </location>
</feature>
<comment type="function">
    <text evidence="2 5">Lectin that binds beta-galactoside and a wide array of complex carbohydrates (PubMed:7890630). Plays a role in regulating apoptosis, cell proliferation and cell differentiation. Inhibits CD45 protein phosphatase activity and therefore the dephosphorylation of Lyn kinase. Strong inducer of T-cell apoptosis.</text>
</comment>
<comment type="subunit">
    <text evidence="2 5">Binds LGALS3BP. Interacts with CD2, CD3, CD4, CD6, CD7, CD43, ALCAM and CD45. Interacts with laminin. Interacts with SUSD2 (By similarity). Exists in a reversible and active monomer-homodimer equilibrium, the mononomer/dimer state is regulated by lectin concentration. Interacts with cargo receptor TMED10; the interaction mediates the translocation from the cytoplasm into the ERGIC (endoplasmic reticulum-Golgi intermediate compartment) and thereby secretion (By similarity).</text>
</comment>
<comment type="subcellular location">
    <subcellularLocation>
        <location evidence="5">Cytoplasm</location>
    </subcellularLocation>
    <subcellularLocation>
        <location evidence="5">Secreted</location>
        <location evidence="5">Extracellular space</location>
        <location evidence="5">Extracellular matrix</location>
    </subcellularLocation>
    <subcellularLocation>
        <location evidence="2">Secreted</location>
    </subcellularLocation>
    <text evidence="2">Can be secreted; the secretion is dependent on protein unfolding and facilitated by the cargo receptor TMED10; it results in protein translocation from the cytoplasm into the ERGIC (endoplasmic reticulum-Golgi intermediate compartment) followed by vesicle entry and secretion.</text>
</comment>
<gene>
    <name type="primary">LGALS1</name>
</gene>
<name>LEG1_CRIGR</name>
<accession>P48538</accession>
<sequence>MACGLVASNLNLKPGECLKVRGEVAPDAKSFVLNLGKDSNNLCLHFNPRFNAHGDANTIVCNSKDNGAWGTEHREPAFPFQPGSTVEVCITFDQADLTIKLPDGHEFKFPNRLNMEAINYMAADGDFKIKCVAFE</sequence>
<evidence type="ECO:0000250" key="1"/>
<evidence type="ECO:0000250" key="2">
    <source>
        <dbReference type="UniProtKB" id="P09382"/>
    </source>
</evidence>
<evidence type="ECO:0000250" key="3">
    <source>
        <dbReference type="UniProtKB" id="P16045"/>
    </source>
</evidence>
<evidence type="ECO:0000255" key="4">
    <source>
        <dbReference type="PROSITE-ProRule" id="PRU00639"/>
    </source>
</evidence>
<evidence type="ECO:0000269" key="5">
    <source>
    </source>
</evidence>
<protein>
    <recommendedName>
        <fullName>Galectin-1</fullName>
        <shortName>Gal-1</shortName>
    </recommendedName>
    <alternativeName>
        <fullName>14 kDa lectin</fullName>
    </alternativeName>
    <alternativeName>
        <fullName>Beta-galactoside-binding lectin L-14-I</fullName>
    </alternativeName>
    <alternativeName>
        <fullName>Galaptin</fullName>
    </alternativeName>
    <alternativeName>
        <fullName>Lactose-binding lectin 1</fullName>
    </alternativeName>
    <alternativeName>
        <fullName>Lectin galactoside-binding soluble 1</fullName>
    </alternativeName>
    <alternativeName>
        <fullName>S-Lac lectin 1</fullName>
    </alternativeName>
</protein>
<dbReference type="EMBL" id="M96676">
    <property type="protein sequence ID" value="AAA36995.1"/>
    <property type="molecule type" value="mRNA"/>
</dbReference>
<dbReference type="PIR" id="A55935">
    <property type="entry name" value="A55935"/>
</dbReference>
<dbReference type="RefSeq" id="XP_003510318.1">
    <property type="nucleotide sequence ID" value="XM_003510270.3"/>
</dbReference>
<dbReference type="RefSeq" id="XP_007622829.1">
    <property type="nucleotide sequence ID" value="XM_007624639.2"/>
</dbReference>
<dbReference type="SMR" id="P48538"/>
<dbReference type="PaxDb" id="10029-XP_007622829.1"/>
<dbReference type="Ensembl" id="ENSCGRT00001020755.1">
    <property type="protein sequence ID" value="ENSCGRP00001016511.1"/>
    <property type="gene ID" value="ENSCGRG00001016814.1"/>
</dbReference>
<dbReference type="GeneID" id="100751963"/>
<dbReference type="CTD" id="3956"/>
<dbReference type="eggNOG" id="KOG3587">
    <property type="taxonomic scope" value="Eukaryota"/>
</dbReference>
<dbReference type="GeneTree" id="ENSGT00940000155534"/>
<dbReference type="OMA" id="IKCMAFE"/>
<dbReference type="OrthoDB" id="8443340at2759"/>
<dbReference type="Proteomes" id="UP000694386">
    <property type="component" value="Unplaced"/>
</dbReference>
<dbReference type="Proteomes" id="UP001108280">
    <property type="component" value="Unplaced"/>
</dbReference>
<dbReference type="GO" id="GO:0005829">
    <property type="term" value="C:cytosol"/>
    <property type="evidence" value="ECO:0007669"/>
    <property type="project" value="Ensembl"/>
</dbReference>
<dbReference type="GO" id="GO:0005615">
    <property type="term" value="C:extracellular space"/>
    <property type="evidence" value="ECO:0007669"/>
    <property type="project" value="Ensembl"/>
</dbReference>
<dbReference type="GO" id="GO:1990724">
    <property type="term" value="C:galectin complex"/>
    <property type="evidence" value="ECO:0007669"/>
    <property type="project" value="Ensembl"/>
</dbReference>
<dbReference type="GO" id="GO:0005886">
    <property type="term" value="C:plasma membrane"/>
    <property type="evidence" value="ECO:0007669"/>
    <property type="project" value="Ensembl"/>
</dbReference>
<dbReference type="GO" id="GO:0030395">
    <property type="term" value="F:lactose binding"/>
    <property type="evidence" value="ECO:0007669"/>
    <property type="project" value="TreeGrafter"/>
</dbReference>
<dbReference type="GO" id="GO:0043236">
    <property type="term" value="F:laminin binding"/>
    <property type="evidence" value="ECO:0007669"/>
    <property type="project" value="TreeGrafter"/>
</dbReference>
<dbReference type="GO" id="GO:0048018">
    <property type="term" value="F:receptor ligand activity"/>
    <property type="evidence" value="ECO:0007669"/>
    <property type="project" value="Ensembl"/>
</dbReference>
<dbReference type="GO" id="GO:0006915">
    <property type="term" value="P:apoptotic process"/>
    <property type="evidence" value="ECO:0007669"/>
    <property type="project" value="UniProtKB-KW"/>
</dbReference>
<dbReference type="GO" id="GO:0098609">
    <property type="term" value="P:cell-cell adhesion"/>
    <property type="evidence" value="ECO:0007669"/>
    <property type="project" value="Ensembl"/>
</dbReference>
<dbReference type="GO" id="GO:0045445">
    <property type="term" value="P:myoblast differentiation"/>
    <property type="evidence" value="ECO:0007669"/>
    <property type="project" value="Ensembl"/>
</dbReference>
<dbReference type="GO" id="GO:2000329">
    <property type="term" value="P:negative regulation of T-helper 17 cell lineage commitment"/>
    <property type="evidence" value="ECO:0007669"/>
    <property type="project" value="Ensembl"/>
</dbReference>
<dbReference type="GO" id="GO:0002317">
    <property type="term" value="P:plasma cell differentiation"/>
    <property type="evidence" value="ECO:0007669"/>
    <property type="project" value="Ensembl"/>
</dbReference>
<dbReference type="GO" id="GO:0043065">
    <property type="term" value="P:positive regulation of apoptotic process"/>
    <property type="evidence" value="ECO:0007669"/>
    <property type="project" value="Ensembl"/>
</dbReference>
<dbReference type="GO" id="GO:0050729">
    <property type="term" value="P:positive regulation of inflammatory response"/>
    <property type="evidence" value="ECO:0007669"/>
    <property type="project" value="Ensembl"/>
</dbReference>
<dbReference type="GO" id="GO:0046598">
    <property type="term" value="P:positive regulation of viral entry into host cell"/>
    <property type="evidence" value="ECO:0007669"/>
    <property type="project" value="Ensembl"/>
</dbReference>
<dbReference type="GO" id="GO:0031295">
    <property type="term" value="P:T cell costimulation"/>
    <property type="evidence" value="ECO:0007669"/>
    <property type="project" value="Ensembl"/>
</dbReference>
<dbReference type="CDD" id="cd00070">
    <property type="entry name" value="GLECT"/>
    <property type="match status" value="1"/>
</dbReference>
<dbReference type="FunFam" id="2.60.120.200:FF:000021">
    <property type="entry name" value="Galectin"/>
    <property type="match status" value="1"/>
</dbReference>
<dbReference type="Gene3D" id="2.60.120.200">
    <property type="match status" value="1"/>
</dbReference>
<dbReference type="InterPro" id="IPR013320">
    <property type="entry name" value="ConA-like_dom_sf"/>
</dbReference>
<dbReference type="InterPro" id="IPR044156">
    <property type="entry name" value="Galectin-like"/>
</dbReference>
<dbReference type="InterPro" id="IPR001079">
    <property type="entry name" value="Galectin_CRD"/>
</dbReference>
<dbReference type="PANTHER" id="PTHR11346">
    <property type="entry name" value="GALECTIN"/>
    <property type="match status" value="1"/>
</dbReference>
<dbReference type="PANTHER" id="PTHR11346:SF97">
    <property type="entry name" value="GALECTIN-1"/>
    <property type="match status" value="1"/>
</dbReference>
<dbReference type="Pfam" id="PF00337">
    <property type="entry name" value="Gal-bind_lectin"/>
    <property type="match status" value="1"/>
</dbReference>
<dbReference type="SMART" id="SM00908">
    <property type="entry name" value="Gal-bind_lectin"/>
    <property type="match status" value="1"/>
</dbReference>
<dbReference type="SMART" id="SM00276">
    <property type="entry name" value="GLECT"/>
    <property type="match status" value="1"/>
</dbReference>
<dbReference type="SUPFAM" id="SSF49899">
    <property type="entry name" value="Concanavalin A-like lectins/glucanases"/>
    <property type="match status" value="1"/>
</dbReference>
<dbReference type="PROSITE" id="PS51304">
    <property type="entry name" value="GALECTIN"/>
    <property type="match status" value="1"/>
</dbReference>
<proteinExistence type="evidence at protein level"/>
<reference key="1">
    <citation type="journal article" date="1995" name="J. Biol. Chem.">
        <title>Galectin-1, a beta-galactoside-binding lectin in Chinese hamster ovary cells. I. Physical and chemical characterization.</title>
        <authorList>
            <person name="Cho M."/>
            <person name="Cummings R.D."/>
        </authorList>
    </citation>
    <scope>NUCLEOTIDE SEQUENCE [MRNA]</scope>
    <scope>FUNCTION</scope>
    <scope>SUBCELLULAR LOCATION</scope>
    <scope>SUBUNIT</scope>
    <source>
        <tissue>Ovary</tissue>
    </source>
</reference>
<organism>
    <name type="scientific">Cricetulus griseus</name>
    <name type="common">Chinese hamster</name>
    <name type="synonym">Cricetulus barabensis griseus</name>
    <dbReference type="NCBI Taxonomy" id="10029"/>
    <lineage>
        <taxon>Eukaryota</taxon>
        <taxon>Metazoa</taxon>
        <taxon>Chordata</taxon>
        <taxon>Craniata</taxon>
        <taxon>Vertebrata</taxon>
        <taxon>Euteleostomi</taxon>
        <taxon>Mammalia</taxon>
        <taxon>Eutheria</taxon>
        <taxon>Euarchontoglires</taxon>
        <taxon>Glires</taxon>
        <taxon>Rodentia</taxon>
        <taxon>Myomorpha</taxon>
        <taxon>Muroidea</taxon>
        <taxon>Cricetidae</taxon>
        <taxon>Cricetinae</taxon>
        <taxon>Cricetulus</taxon>
    </lineage>
</organism>
<keyword id="KW-0007">Acetylation</keyword>
<keyword id="KW-0053">Apoptosis</keyword>
<keyword id="KW-0963">Cytoplasm</keyword>
<keyword id="KW-0272">Extracellular matrix</keyword>
<keyword id="KW-0430">Lectin</keyword>
<keyword id="KW-0597">Phosphoprotein</keyword>
<keyword id="KW-0964">Secreted</keyword>